<name>SEP15_MOUSE</name>
<comment type="function">
    <text evidence="2 3">May be involved in redox reactions associated with the formation of disulfide bonds (By similarity). May contribute to the quality control of protein folding in the endoplasmic reticulum. May regulate protein folding by enhancing the catalytic activity of UGGT1/UGCGL1 and UGGT2/UGCGL2 (By similarity).</text>
</comment>
<comment type="subunit">
    <text evidence="2 5">Forms a tight complex with UGGT1/UGCGL1 (PubMed:11278576). Interacts with UGGT2/UGCGL2 (By similarity). Interacts with RDH11 (By similarity).</text>
</comment>
<comment type="subcellular location">
    <subcellularLocation>
        <location evidence="1">Endoplasmic reticulum lumen</location>
    </subcellularLocation>
    <text evidence="1">The association with UGGT1/UGCGL1 is essential for its retention in the endoplasmic reticulum.</text>
</comment>
<comment type="similarity">
    <text evidence="7">Belongs to the selenoprotein M/F family.</text>
</comment>
<organism>
    <name type="scientific">Mus musculus</name>
    <name type="common">Mouse</name>
    <dbReference type="NCBI Taxonomy" id="10090"/>
    <lineage>
        <taxon>Eukaryota</taxon>
        <taxon>Metazoa</taxon>
        <taxon>Chordata</taxon>
        <taxon>Craniata</taxon>
        <taxon>Vertebrata</taxon>
        <taxon>Euteleostomi</taxon>
        <taxon>Mammalia</taxon>
        <taxon>Eutheria</taxon>
        <taxon>Euarchontoglires</taxon>
        <taxon>Glires</taxon>
        <taxon>Rodentia</taxon>
        <taxon>Myomorpha</taxon>
        <taxon>Muroidea</taxon>
        <taxon>Muridae</taxon>
        <taxon>Murinae</taxon>
        <taxon>Mus</taxon>
        <taxon>Mus</taxon>
    </lineage>
</organism>
<proteinExistence type="evidence at protein level"/>
<dbReference type="EMBL" id="AF288740">
    <property type="protein sequence ID" value="AAG31765.1"/>
    <property type="molecule type" value="mRNA"/>
</dbReference>
<dbReference type="EMBL" id="AK020419">
    <property type="protein sequence ID" value="BAC55255.1"/>
    <property type="molecule type" value="mRNA"/>
</dbReference>
<dbReference type="EMBL" id="AK159085">
    <property type="protein sequence ID" value="BAE34803.1"/>
    <property type="molecule type" value="mRNA"/>
</dbReference>
<dbReference type="EMBL" id="AK159353">
    <property type="protein sequence ID" value="BAE35012.1"/>
    <property type="molecule type" value="mRNA"/>
</dbReference>
<dbReference type="EMBL" id="BC019792">
    <property type="protein sequence ID" value="AAH19792.2"/>
    <property type="molecule type" value="mRNA"/>
</dbReference>
<dbReference type="CCDS" id="CCDS17884.1"/>
<dbReference type="RefSeq" id="NP_444332.1">
    <property type="nucleotide sequence ID" value="NM_053102.2"/>
</dbReference>
<dbReference type="BioGRID" id="220234">
    <property type="interactions" value="4"/>
</dbReference>
<dbReference type="FunCoup" id="Q9ERR7">
    <property type="interactions" value="1455"/>
</dbReference>
<dbReference type="IntAct" id="Q9ERR7">
    <property type="interactions" value="1"/>
</dbReference>
<dbReference type="STRING" id="10090.ENSMUSP00000046910"/>
<dbReference type="iPTMnet" id="Q9ERR7"/>
<dbReference type="PhosphoSitePlus" id="Q9ERR7"/>
<dbReference type="SwissPalm" id="Q9ERR7"/>
<dbReference type="jPOST" id="Q9ERR7"/>
<dbReference type="PaxDb" id="10090-ENSMUSP00000046910"/>
<dbReference type="PeptideAtlas" id="Q9ERR7"/>
<dbReference type="ProteomicsDB" id="256779"/>
<dbReference type="Pumba" id="Q9ERR7"/>
<dbReference type="GeneID" id="93684"/>
<dbReference type="KEGG" id="mmu:93684"/>
<dbReference type="UCSC" id="uc008rpr.1">
    <property type="organism name" value="mouse"/>
</dbReference>
<dbReference type="AGR" id="MGI:1927947"/>
<dbReference type="CTD" id="9403"/>
<dbReference type="MGI" id="MGI:1927947">
    <property type="gene designation" value="Selenof"/>
</dbReference>
<dbReference type="eggNOG" id="KOG3384">
    <property type="taxonomic scope" value="Eukaryota"/>
</dbReference>
<dbReference type="InParanoid" id="Q9ERR7"/>
<dbReference type="OrthoDB" id="52577at9989"/>
<dbReference type="PhylomeDB" id="Q9ERR7"/>
<dbReference type="TreeFam" id="TF315117"/>
<dbReference type="BioGRID-ORCS" id="93684">
    <property type="hits" value="0 hits in 49 CRISPR screens"/>
</dbReference>
<dbReference type="ChiTaRS" id="Sep15">
    <property type="organism name" value="mouse"/>
</dbReference>
<dbReference type="PRO" id="PR:Q9ERR7"/>
<dbReference type="Proteomes" id="UP000000589">
    <property type="component" value="Unplaced"/>
</dbReference>
<dbReference type="RNAct" id="Q9ERR7">
    <property type="molecule type" value="protein"/>
</dbReference>
<dbReference type="GO" id="GO:0005788">
    <property type="term" value="C:endoplasmic reticulum lumen"/>
    <property type="evidence" value="ECO:0000250"/>
    <property type="project" value="UniProtKB"/>
</dbReference>
<dbReference type="GO" id="GO:0051084">
    <property type="term" value="P:'de novo' post-translational protein folding"/>
    <property type="evidence" value="ECO:0000304"/>
    <property type="project" value="UniProtKB"/>
</dbReference>
<dbReference type="GO" id="GO:0032496">
    <property type="term" value="P:response to lipopolysaccharide"/>
    <property type="evidence" value="ECO:0000314"/>
    <property type="project" value="MGI"/>
</dbReference>
<dbReference type="FunFam" id="3.40.30.50:FF:000001">
    <property type="entry name" value="15 kDa selenoprotein"/>
    <property type="match status" value="1"/>
</dbReference>
<dbReference type="Gene3D" id="3.40.30.50">
    <property type="entry name" value="Sep15/SelM thioredoxin-like domain, active-site redox motif"/>
    <property type="match status" value="1"/>
</dbReference>
<dbReference type="InterPro" id="IPR038219">
    <property type="entry name" value="Sep15/SelM_sf"/>
</dbReference>
<dbReference type="InterPro" id="IPR039992">
    <property type="entry name" value="Sep15_SelM"/>
</dbReference>
<dbReference type="InterPro" id="IPR014912">
    <property type="entry name" value="Sep15_SelM_dom"/>
</dbReference>
<dbReference type="InterPro" id="IPR036249">
    <property type="entry name" value="Thioredoxin-like_sf"/>
</dbReference>
<dbReference type="PANTHER" id="PTHR13077">
    <property type="entry name" value="SELENOPROTEIN F"/>
    <property type="match status" value="1"/>
</dbReference>
<dbReference type="PANTHER" id="PTHR13077:SF6">
    <property type="entry name" value="SELENOPROTEIN F"/>
    <property type="match status" value="1"/>
</dbReference>
<dbReference type="Pfam" id="PF08806">
    <property type="entry name" value="Sep15_SelM"/>
    <property type="match status" value="1"/>
</dbReference>
<dbReference type="SUPFAM" id="SSF52833">
    <property type="entry name" value="Thioredoxin-like"/>
    <property type="match status" value="1"/>
</dbReference>
<feature type="signal peptide" evidence="4">
    <location>
        <begin position="1"/>
        <end position="28"/>
    </location>
</feature>
<feature type="chain" id="PRO_0000022308" description="Selenoprotein F">
    <location>
        <begin position="29"/>
        <end position="162"/>
    </location>
</feature>
<feature type="non-standard amino acid" description="Selenocysteine">
    <location>
        <position position="93"/>
    </location>
</feature>
<feature type="sequence conflict" description="In Ref. 1; AAG31765 and 2; BAE35012/BAC55255." evidence="7" ref="1 2">
    <original>V</original>
    <variation>A</variation>
    <location>
        <position position="26"/>
    </location>
</feature>
<feature type="sequence conflict" description="In Ref. 3; AAH19792." evidence="7" ref="3">
    <original>F</original>
    <variation>L</variation>
    <location>
        <position position="98"/>
    </location>
</feature>
<evidence type="ECO:0000250" key="1"/>
<evidence type="ECO:0000250" key="2">
    <source>
        <dbReference type="UniProtKB" id="O60613"/>
    </source>
</evidence>
<evidence type="ECO:0000250" key="3">
    <source>
        <dbReference type="UniProtKB" id="Q923V8"/>
    </source>
</evidence>
<evidence type="ECO:0000255" key="4"/>
<evidence type="ECO:0000269" key="5">
    <source>
    </source>
</evidence>
<evidence type="ECO:0000303" key="6">
    <source>
    </source>
</evidence>
<evidence type="ECO:0000305" key="7"/>
<evidence type="ECO:0000312" key="8">
    <source>
        <dbReference type="MGI" id="MGI:1927947"/>
    </source>
</evidence>
<sequence length="162" mass="17806">MAAGQGGWLRPALGLRLLLATAFQAVSALGAEFASEACRELGFSSNLLCSSCDLLGQFNLLPLDPVCRGCCQEEAQFETKKLYAGAILEVCGUKLGRFPQVQAFVRSDKPKLFRGLQIKYVRGSDPVLKLLDDNGNIAEELSILKWNTDSVEEFLSEKLERI</sequence>
<accession>Q9ERR7</accession>
<accession>Q3TXW1</accession>
<accession>Q544W8</accession>
<accession>Q8VE40</accession>
<reference key="1">
    <citation type="journal article" date="2000" name="J. Biol. Chem.">
        <title>Structure-expression relationships of the 15-kDa selenoprotein gene. Possible role of the protein in cancer etiology.</title>
        <authorList>
            <person name="Kumaraswamy E."/>
            <person name="Malykh A."/>
            <person name="Korotkov K.V."/>
            <person name="Kozyavkin S."/>
            <person name="Hu Y."/>
            <person name="Kwon S.Y."/>
            <person name="Moustafa M.E."/>
            <person name="Carlson B.A."/>
            <person name="Berry M.J."/>
            <person name="Lee B.J."/>
            <person name="Hatfield D.L."/>
            <person name="Diamond A.M."/>
            <person name="Gladyshev V.N."/>
        </authorList>
    </citation>
    <scope>NUCLEOTIDE SEQUENCE [MRNA]</scope>
</reference>
<reference key="2">
    <citation type="journal article" date="2005" name="Science">
        <title>The transcriptional landscape of the mammalian genome.</title>
        <authorList>
            <person name="Carninci P."/>
            <person name="Kasukawa T."/>
            <person name="Katayama S."/>
            <person name="Gough J."/>
            <person name="Frith M.C."/>
            <person name="Maeda N."/>
            <person name="Oyama R."/>
            <person name="Ravasi T."/>
            <person name="Lenhard B."/>
            <person name="Wells C."/>
            <person name="Kodzius R."/>
            <person name="Shimokawa K."/>
            <person name="Bajic V.B."/>
            <person name="Brenner S.E."/>
            <person name="Batalov S."/>
            <person name="Forrest A.R."/>
            <person name="Zavolan M."/>
            <person name="Davis M.J."/>
            <person name="Wilming L.G."/>
            <person name="Aidinis V."/>
            <person name="Allen J.E."/>
            <person name="Ambesi-Impiombato A."/>
            <person name="Apweiler R."/>
            <person name="Aturaliya R.N."/>
            <person name="Bailey T.L."/>
            <person name="Bansal M."/>
            <person name="Baxter L."/>
            <person name="Beisel K.W."/>
            <person name="Bersano T."/>
            <person name="Bono H."/>
            <person name="Chalk A.M."/>
            <person name="Chiu K.P."/>
            <person name="Choudhary V."/>
            <person name="Christoffels A."/>
            <person name="Clutterbuck D.R."/>
            <person name="Crowe M.L."/>
            <person name="Dalla E."/>
            <person name="Dalrymple B.P."/>
            <person name="de Bono B."/>
            <person name="Della Gatta G."/>
            <person name="di Bernardo D."/>
            <person name="Down T."/>
            <person name="Engstrom P."/>
            <person name="Fagiolini M."/>
            <person name="Faulkner G."/>
            <person name="Fletcher C.F."/>
            <person name="Fukushima T."/>
            <person name="Furuno M."/>
            <person name="Futaki S."/>
            <person name="Gariboldi M."/>
            <person name="Georgii-Hemming P."/>
            <person name="Gingeras T.R."/>
            <person name="Gojobori T."/>
            <person name="Green R.E."/>
            <person name="Gustincich S."/>
            <person name="Harbers M."/>
            <person name="Hayashi Y."/>
            <person name="Hensch T.K."/>
            <person name="Hirokawa N."/>
            <person name="Hill D."/>
            <person name="Huminiecki L."/>
            <person name="Iacono M."/>
            <person name="Ikeo K."/>
            <person name="Iwama A."/>
            <person name="Ishikawa T."/>
            <person name="Jakt M."/>
            <person name="Kanapin A."/>
            <person name="Katoh M."/>
            <person name="Kawasawa Y."/>
            <person name="Kelso J."/>
            <person name="Kitamura H."/>
            <person name="Kitano H."/>
            <person name="Kollias G."/>
            <person name="Krishnan S.P."/>
            <person name="Kruger A."/>
            <person name="Kummerfeld S.K."/>
            <person name="Kurochkin I.V."/>
            <person name="Lareau L.F."/>
            <person name="Lazarevic D."/>
            <person name="Lipovich L."/>
            <person name="Liu J."/>
            <person name="Liuni S."/>
            <person name="McWilliam S."/>
            <person name="Madan Babu M."/>
            <person name="Madera M."/>
            <person name="Marchionni L."/>
            <person name="Matsuda H."/>
            <person name="Matsuzawa S."/>
            <person name="Miki H."/>
            <person name="Mignone F."/>
            <person name="Miyake S."/>
            <person name="Morris K."/>
            <person name="Mottagui-Tabar S."/>
            <person name="Mulder N."/>
            <person name="Nakano N."/>
            <person name="Nakauchi H."/>
            <person name="Ng P."/>
            <person name="Nilsson R."/>
            <person name="Nishiguchi S."/>
            <person name="Nishikawa S."/>
            <person name="Nori F."/>
            <person name="Ohara O."/>
            <person name="Okazaki Y."/>
            <person name="Orlando V."/>
            <person name="Pang K.C."/>
            <person name="Pavan W.J."/>
            <person name="Pavesi G."/>
            <person name="Pesole G."/>
            <person name="Petrovsky N."/>
            <person name="Piazza S."/>
            <person name="Reed J."/>
            <person name="Reid J.F."/>
            <person name="Ring B.Z."/>
            <person name="Ringwald M."/>
            <person name="Rost B."/>
            <person name="Ruan Y."/>
            <person name="Salzberg S.L."/>
            <person name="Sandelin A."/>
            <person name="Schneider C."/>
            <person name="Schoenbach C."/>
            <person name="Sekiguchi K."/>
            <person name="Semple C.A."/>
            <person name="Seno S."/>
            <person name="Sessa L."/>
            <person name="Sheng Y."/>
            <person name="Shibata Y."/>
            <person name="Shimada H."/>
            <person name="Shimada K."/>
            <person name="Silva D."/>
            <person name="Sinclair B."/>
            <person name="Sperling S."/>
            <person name="Stupka E."/>
            <person name="Sugiura K."/>
            <person name="Sultana R."/>
            <person name="Takenaka Y."/>
            <person name="Taki K."/>
            <person name="Tammoja K."/>
            <person name="Tan S.L."/>
            <person name="Tang S."/>
            <person name="Taylor M.S."/>
            <person name="Tegner J."/>
            <person name="Teichmann S.A."/>
            <person name="Ueda H.R."/>
            <person name="van Nimwegen E."/>
            <person name="Verardo R."/>
            <person name="Wei C.L."/>
            <person name="Yagi K."/>
            <person name="Yamanishi H."/>
            <person name="Zabarovsky E."/>
            <person name="Zhu S."/>
            <person name="Zimmer A."/>
            <person name="Hide W."/>
            <person name="Bult C."/>
            <person name="Grimmond S.M."/>
            <person name="Teasdale R.D."/>
            <person name="Liu E.T."/>
            <person name="Brusic V."/>
            <person name="Quackenbush J."/>
            <person name="Wahlestedt C."/>
            <person name="Mattick J.S."/>
            <person name="Hume D.A."/>
            <person name="Kai C."/>
            <person name="Sasaki D."/>
            <person name="Tomaru Y."/>
            <person name="Fukuda S."/>
            <person name="Kanamori-Katayama M."/>
            <person name="Suzuki M."/>
            <person name="Aoki J."/>
            <person name="Arakawa T."/>
            <person name="Iida J."/>
            <person name="Imamura K."/>
            <person name="Itoh M."/>
            <person name="Kato T."/>
            <person name="Kawaji H."/>
            <person name="Kawagashira N."/>
            <person name="Kawashima T."/>
            <person name="Kojima M."/>
            <person name="Kondo S."/>
            <person name="Konno H."/>
            <person name="Nakano K."/>
            <person name="Ninomiya N."/>
            <person name="Nishio T."/>
            <person name="Okada M."/>
            <person name="Plessy C."/>
            <person name="Shibata K."/>
            <person name="Shiraki T."/>
            <person name="Suzuki S."/>
            <person name="Tagami M."/>
            <person name="Waki K."/>
            <person name="Watahiki A."/>
            <person name="Okamura-Oho Y."/>
            <person name="Suzuki H."/>
            <person name="Kawai J."/>
            <person name="Hayashizaki Y."/>
        </authorList>
    </citation>
    <scope>NUCLEOTIDE SEQUENCE [LARGE SCALE MRNA]</scope>
    <source>
        <strain>C57BL/6J</strain>
    </source>
</reference>
<reference key="3">
    <citation type="journal article" date="2004" name="Genome Res.">
        <title>The status, quality, and expansion of the NIH full-length cDNA project: the Mammalian Gene Collection (MGC).</title>
        <authorList>
            <consortium name="The MGC Project Team"/>
        </authorList>
    </citation>
    <scope>NUCLEOTIDE SEQUENCE [LARGE SCALE MRNA]</scope>
    <source>
        <strain>FVB/N-3</strain>
        <tissue>Mammary tumor</tissue>
    </source>
</reference>
<reference key="4">
    <citation type="journal article" date="2001" name="J. Biol. Chem.">
        <title>Association between the 15-kDa selenoprotein and UDP-glucose:glycoprotein glucosyltransferase in the endoplasmic reticulum of mammalian cells.</title>
        <authorList>
            <person name="Korotkov K.V."/>
            <person name="Kumaraswamy E."/>
            <person name="Zhou Y."/>
            <person name="Hatfield D.L."/>
            <person name="Gladyshev V.N."/>
        </authorList>
    </citation>
    <scope>INTERACTION WITH UGGT1</scope>
</reference>
<reference key="5">
    <citation type="journal article" date="2010" name="Cell">
        <title>A tissue-specific atlas of mouse protein phosphorylation and expression.</title>
        <authorList>
            <person name="Huttlin E.L."/>
            <person name="Jedrychowski M.P."/>
            <person name="Elias J.E."/>
            <person name="Goswami T."/>
            <person name="Rad R."/>
            <person name="Beausoleil S.A."/>
            <person name="Villen J."/>
            <person name="Haas W."/>
            <person name="Sowa M.E."/>
            <person name="Gygi S.P."/>
        </authorList>
    </citation>
    <scope>IDENTIFICATION BY MASS SPECTROMETRY [LARGE SCALE ANALYSIS]</scope>
    <source>
        <tissue>Brain</tissue>
        <tissue>Brown adipose tissue</tissue>
        <tissue>Heart</tissue>
        <tissue>Kidney</tissue>
        <tissue>Liver</tissue>
        <tissue>Lung</tissue>
        <tissue>Pancreas</tissue>
        <tissue>Spleen</tissue>
        <tissue>Testis</tissue>
    </source>
</reference>
<gene>
    <name evidence="8" type="primary">Selenof</name>
    <name evidence="8" type="synonym">Sep15</name>
</gene>
<protein>
    <recommendedName>
        <fullName evidence="2">Selenoprotein F</fullName>
    </recommendedName>
    <alternativeName>
        <fullName evidence="6">15 kDa selenoprotein</fullName>
    </alternativeName>
</protein>
<keyword id="KW-0256">Endoplasmic reticulum</keyword>
<keyword id="KW-1185">Reference proteome</keyword>
<keyword id="KW-0712">Selenocysteine</keyword>
<keyword id="KW-0732">Signal</keyword>